<sequence length="224" mass="25398">MQYNLTRIDPDAPNDQYPIGERETVSDPLEDQVHKNIFMGKLEDVLSGAVNWGRKNSLWPYNFGLSCCYVEMTTAFTAPHDIARFGAEVIRASPRQADFMVIAGTCFIKMAPIIQRLYEQMLEPKWVISMGSCANSGGMYDIYSVVQGVDKFLPVDVYVPGCPPRPEAFLQGLMLLQESIGQERRPLSWVVGDQGVYRAEMPSQKEQRREQRIQVTNLRSPDEV</sequence>
<name>NUOB_PSEF5</name>
<dbReference type="EC" id="7.1.1.-" evidence="1"/>
<dbReference type="EMBL" id="CP000076">
    <property type="protein sequence ID" value="AAY93162.1"/>
    <property type="molecule type" value="Genomic_DNA"/>
</dbReference>
<dbReference type="RefSeq" id="WP_011062186.1">
    <property type="nucleotide sequence ID" value="NC_004129.6"/>
</dbReference>
<dbReference type="SMR" id="Q4K9T5"/>
<dbReference type="STRING" id="220664.PFL_3898"/>
<dbReference type="KEGG" id="pfl:PFL_3898"/>
<dbReference type="eggNOG" id="COG0377">
    <property type="taxonomic scope" value="Bacteria"/>
</dbReference>
<dbReference type="HOGENOM" id="CLU_055737_7_3_6"/>
<dbReference type="Proteomes" id="UP000008540">
    <property type="component" value="Chromosome"/>
</dbReference>
<dbReference type="GO" id="GO:0005886">
    <property type="term" value="C:plasma membrane"/>
    <property type="evidence" value="ECO:0007669"/>
    <property type="project" value="UniProtKB-SubCell"/>
</dbReference>
<dbReference type="GO" id="GO:0045271">
    <property type="term" value="C:respiratory chain complex I"/>
    <property type="evidence" value="ECO:0007669"/>
    <property type="project" value="TreeGrafter"/>
</dbReference>
<dbReference type="GO" id="GO:0051539">
    <property type="term" value="F:4 iron, 4 sulfur cluster binding"/>
    <property type="evidence" value="ECO:0007669"/>
    <property type="project" value="UniProtKB-KW"/>
</dbReference>
<dbReference type="GO" id="GO:0005506">
    <property type="term" value="F:iron ion binding"/>
    <property type="evidence" value="ECO:0007669"/>
    <property type="project" value="UniProtKB-UniRule"/>
</dbReference>
<dbReference type="GO" id="GO:0008137">
    <property type="term" value="F:NADH dehydrogenase (ubiquinone) activity"/>
    <property type="evidence" value="ECO:0007669"/>
    <property type="project" value="InterPro"/>
</dbReference>
<dbReference type="GO" id="GO:0050136">
    <property type="term" value="F:NADH:ubiquinone reductase (non-electrogenic) activity"/>
    <property type="evidence" value="ECO:0007669"/>
    <property type="project" value="UniProtKB-UniRule"/>
</dbReference>
<dbReference type="GO" id="GO:0048038">
    <property type="term" value="F:quinone binding"/>
    <property type="evidence" value="ECO:0007669"/>
    <property type="project" value="UniProtKB-KW"/>
</dbReference>
<dbReference type="GO" id="GO:0009060">
    <property type="term" value="P:aerobic respiration"/>
    <property type="evidence" value="ECO:0007669"/>
    <property type="project" value="TreeGrafter"/>
</dbReference>
<dbReference type="GO" id="GO:0015990">
    <property type="term" value="P:electron transport coupled proton transport"/>
    <property type="evidence" value="ECO:0007669"/>
    <property type="project" value="TreeGrafter"/>
</dbReference>
<dbReference type="FunFam" id="3.40.50.12280:FF:000002">
    <property type="entry name" value="NADH-quinone oxidoreductase subunit B"/>
    <property type="match status" value="1"/>
</dbReference>
<dbReference type="Gene3D" id="3.40.50.12280">
    <property type="match status" value="1"/>
</dbReference>
<dbReference type="HAMAP" id="MF_01356">
    <property type="entry name" value="NDH1_NuoB"/>
    <property type="match status" value="1"/>
</dbReference>
<dbReference type="InterPro" id="IPR006137">
    <property type="entry name" value="NADH_UbQ_OxRdtase-like_20kDa"/>
</dbReference>
<dbReference type="InterPro" id="IPR006138">
    <property type="entry name" value="NADH_UQ_OxRdtase_20Kd_su"/>
</dbReference>
<dbReference type="NCBIfam" id="TIGR01957">
    <property type="entry name" value="nuoB_fam"/>
    <property type="match status" value="1"/>
</dbReference>
<dbReference type="NCBIfam" id="NF005012">
    <property type="entry name" value="PRK06411.1"/>
    <property type="match status" value="1"/>
</dbReference>
<dbReference type="PANTHER" id="PTHR11995">
    <property type="entry name" value="NADH DEHYDROGENASE"/>
    <property type="match status" value="1"/>
</dbReference>
<dbReference type="PANTHER" id="PTHR11995:SF14">
    <property type="entry name" value="NADH DEHYDROGENASE [UBIQUINONE] IRON-SULFUR PROTEIN 7, MITOCHONDRIAL"/>
    <property type="match status" value="1"/>
</dbReference>
<dbReference type="Pfam" id="PF01058">
    <property type="entry name" value="Oxidored_q6"/>
    <property type="match status" value="1"/>
</dbReference>
<dbReference type="SUPFAM" id="SSF56770">
    <property type="entry name" value="HydA/Nqo6-like"/>
    <property type="match status" value="1"/>
</dbReference>
<dbReference type="PROSITE" id="PS01150">
    <property type="entry name" value="COMPLEX1_20K"/>
    <property type="match status" value="1"/>
</dbReference>
<proteinExistence type="inferred from homology"/>
<keyword id="KW-0004">4Fe-4S</keyword>
<keyword id="KW-0997">Cell inner membrane</keyword>
<keyword id="KW-1003">Cell membrane</keyword>
<keyword id="KW-0408">Iron</keyword>
<keyword id="KW-0411">Iron-sulfur</keyword>
<keyword id="KW-0472">Membrane</keyword>
<keyword id="KW-0479">Metal-binding</keyword>
<keyword id="KW-0520">NAD</keyword>
<keyword id="KW-0874">Quinone</keyword>
<keyword id="KW-1278">Translocase</keyword>
<keyword id="KW-0813">Transport</keyword>
<keyword id="KW-0830">Ubiquinone</keyword>
<comment type="function">
    <text evidence="1">NDH-1 shuttles electrons from NADH, via FMN and iron-sulfur (Fe-S) centers, to quinones in the respiratory chain. The immediate electron acceptor for the enzyme in this species is believed to be ubiquinone. Couples the redox reaction to proton translocation (for every two electrons transferred, four hydrogen ions are translocated across the cytoplasmic membrane), and thus conserves the redox energy in a proton gradient.</text>
</comment>
<comment type="catalytic activity">
    <reaction evidence="1">
        <text>a quinone + NADH + 5 H(+)(in) = a quinol + NAD(+) + 4 H(+)(out)</text>
        <dbReference type="Rhea" id="RHEA:57888"/>
        <dbReference type="ChEBI" id="CHEBI:15378"/>
        <dbReference type="ChEBI" id="CHEBI:24646"/>
        <dbReference type="ChEBI" id="CHEBI:57540"/>
        <dbReference type="ChEBI" id="CHEBI:57945"/>
        <dbReference type="ChEBI" id="CHEBI:132124"/>
    </reaction>
</comment>
<comment type="cofactor">
    <cofactor evidence="1">
        <name>[4Fe-4S] cluster</name>
        <dbReference type="ChEBI" id="CHEBI:49883"/>
    </cofactor>
    <text evidence="1">Binds 1 [4Fe-4S] cluster.</text>
</comment>
<comment type="subunit">
    <text evidence="1">NDH-1 is composed of 13 different subunits. Subunits NuoB, CD, E, F, and G constitute the peripheral sector of the complex.</text>
</comment>
<comment type="subcellular location">
    <subcellularLocation>
        <location evidence="1">Cell inner membrane</location>
        <topology evidence="1">Peripheral membrane protein</topology>
        <orientation evidence="1">Cytoplasmic side</orientation>
    </subcellularLocation>
</comment>
<comment type="similarity">
    <text evidence="1">Belongs to the complex I 20 kDa subunit family.</text>
</comment>
<gene>
    <name evidence="1" type="primary">nuoB</name>
    <name type="ordered locus">PFL_3898</name>
</gene>
<feature type="chain" id="PRO_0000376311" description="NADH-quinone oxidoreductase subunit B">
    <location>
        <begin position="1"/>
        <end position="224"/>
    </location>
</feature>
<feature type="region of interest" description="Disordered" evidence="2">
    <location>
        <begin position="1"/>
        <end position="20"/>
    </location>
</feature>
<feature type="region of interest" description="Disordered" evidence="2">
    <location>
        <begin position="201"/>
        <end position="224"/>
    </location>
</feature>
<feature type="compositionally biased region" description="Basic and acidic residues" evidence="2">
    <location>
        <begin position="203"/>
        <end position="212"/>
    </location>
</feature>
<feature type="compositionally biased region" description="Polar residues" evidence="2">
    <location>
        <begin position="213"/>
        <end position="224"/>
    </location>
</feature>
<feature type="binding site" evidence="1">
    <location>
        <position position="67"/>
    </location>
    <ligand>
        <name>[4Fe-4S] cluster</name>
        <dbReference type="ChEBI" id="CHEBI:49883"/>
    </ligand>
</feature>
<feature type="binding site" evidence="1">
    <location>
        <position position="68"/>
    </location>
    <ligand>
        <name>[4Fe-4S] cluster</name>
        <dbReference type="ChEBI" id="CHEBI:49883"/>
    </ligand>
</feature>
<feature type="binding site" evidence="1">
    <location>
        <position position="133"/>
    </location>
    <ligand>
        <name>[4Fe-4S] cluster</name>
        <dbReference type="ChEBI" id="CHEBI:49883"/>
    </ligand>
</feature>
<feature type="binding site" evidence="1">
    <location>
        <position position="162"/>
    </location>
    <ligand>
        <name>[4Fe-4S] cluster</name>
        <dbReference type="ChEBI" id="CHEBI:49883"/>
    </ligand>
</feature>
<evidence type="ECO:0000255" key="1">
    <source>
        <dbReference type="HAMAP-Rule" id="MF_01356"/>
    </source>
</evidence>
<evidence type="ECO:0000256" key="2">
    <source>
        <dbReference type="SAM" id="MobiDB-lite"/>
    </source>
</evidence>
<organism>
    <name type="scientific">Pseudomonas fluorescens (strain ATCC BAA-477 / NRRL B-23932 / Pf-5)</name>
    <dbReference type="NCBI Taxonomy" id="220664"/>
    <lineage>
        <taxon>Bacteria</taxon>
        <taxon>Pseudomonadati</taxon>
        <taxon>Pseudomonadota</taxon>
        <taxon>Gammaproteobacteria</taxon>
        <taxon>Pseudomonadales</taxon>
        <taxon>Pseudomonadaceae</taxon>
        <taxon>Pseudomonas</taxon>
    </lineage>
</organism>
<accession>Q4K9T5</accession>
<protein>
    <recommendedName>
        <fullName evidence="1">NADH-quinone oxidoreductase subunit B</fullName>
        <ecNumber evidence="1">7.1.1.-</ecNumber>
    </recommendedName>
    <alternativeName>
        <fullName evidence="1">NADH dehydrogenase I subunit B</fullName>
    </alternativeName>
    <alternativeName>
        <fullName evidence="1">NDH-1 subunit B</fullName>
    </alternativeName>
</protein>
<reference key="1">
    <citation type="journal article" date="2005" name="Nat. Biotechnol.">
        <title>Complete genome sequence of the plant commensal Pseudomonas fluorescens Pf-5.</title>
        <authorList>
            <person name="Paulsen I.T."/>
            <person name="Press C.M."/>
            <person name="Ravel J."/>
            <person name="Kobayashi D.Y."/>
            <person name="Myers G.S.A."/>
            <person name="Mavrodi D.V."/>
            <person name="DeBoy R.T."/>
            <person name="Seshadri R."/>
            <person name="Ren Q."/>
            <person name="Madupu R."/>
            <person name="Dodson R.J."/>
            <person name="Durkin A.S."/>
            <person name="Brinkac L.M."/>
            <person name="Daugherty S.C."/>
            <person name="Sullivan S.A."/>
            <person name="Rosovitz M.J."/>
            <person name="Gwinn M.L."/>
            <person name="Zhou L."/>
            <person name="Schneider D.J."/>
            <person name="Cartinhour S.W."/>
            <person name="Nelson W.C."/>
            <person name="Weidman J."/>
            <person name="Watkins K."/>
            <person name="Tran K."/>
            <person name="Khouri H."/>
            <person name="Pierson E.A."/>
            <person name="Pierson L.S. III"/>
            <person name="Thomashow L.S."/>
            <person name="Loper J.E."/>
        </authorList>
    </citation>
    <scope>NUCLEOTIDE SEQUENCE [LARGE SCALE GENOMIC DNA]</scope>
    <source>
        <strain>ATCC BAA-477 / NRRL B-23932 / Pf-5</strain>
    </source>
</reference>